<dbReference type="EMBL" id="M26414">
    <property type="protein sequence ID" value="AAA22214.1"/>
    <property type="molecule type" value="Genomic_DNA"/>
</dbReference>
<dbReference type="EMBL" id="L47971">
    <property type="protein sequence ID" value="AAB06823.1"/>
    <property type="molecule type" value="Genomic_DNA"/>
</dbReference>
<dbReference type="EMBL" id="AL009126">
    <property type="protein sequence ID" value="CAB11916.1"/>
    <property type="molecule type" value="Genomic_DNA"/>
</dbReference>
<dbReference type="PIR" id="A32307">
    <property type="entry name" value="B32307"/>
</dbReference>
<dbReference type="RefSeq" id="NP_388021.1">
    <property type="nucleotide sequence ID" value="NC_000964.3"/>
</dbReference>
<dbReference type="RefSeq" id="WP_003156543.1">
    <property type="nucleotide sequence ID" value="NZ_OZ025638.1"/>
</dbReference>
<dbReference type="PDB" id="3J9W">
    <property type="method" value="EM"/>
    <property type="resolution" value="3.90 A"/>
    <property type="chains" value="B8=1-37"/>
</dbReference>
<dbReference type="PDB" id="5NJT">
    <property type="method" value="EM"/>
    <property type="resolution" value="3.80 A"/>
    <property type="chains" value="t=2-37"/>
</dbReference>
<dbReference type="PDB" id="6HA1">
    <property type="method" value="EM"/>
    <property type="resolution" value="3.10 A"/>
    <property type="chains" value="4=1-37"/>
</dbReference>
<dbReference type="PDB" id="6HA8">
    <property type="method" value="EM"/>
    <property type="resolution" value="3.50 A"/>
    <property type="chains" value="4=1-37"/>
</dbReference>
<dbReference type="PDB" id="6HTQ">
    <property type="method" value="EM"/>
    <property type="resolution" value="4.50 A"/>
    <property type="chains" value="5=1-37"/>
</dbReference>
<dbReference type="PDB" id="6TNN">
    <property type="method" value="EM"/>
    <property type="resolution" value="3.07 A"/>
    <property type="chains" value="t=1-37"/>
</dbReference>
<dbReference type="PDB" id="6TPQ">
    <property type="method" value="EM"/>
    <property type="resolution" value="3.07 A"/>
    <property type="chains" value="t=1-37"/>
</dbReference>
<dbReference type="PDB" id="7AQC">
    <property type="method" value="EM"/>
    <property type="resolution" value="2.99 A"/>
    <property type="chains" value="f=1-37"/>
</dbReference>
<dbReference type="PDB" id="7AQD">
    <property type="method" value="EM"/>
    <property type="resolution" value="3.10 A"/>
    <property type="chains" value="f=1-37"/>
</dbReference>
<dbReference type="PDB" id="7AS8">
    <property type="method" value="EM"/>
    <property type="resolution" value="2.90 A"/>
    <property type="chains" value="j=1-37"/>
</dbReference>
<dbReference type="PDB" id="7AS9">
    <property type="method" value="EM"/>
    <property type="resolution" value="3.50 A"/>
    <property type="chains" value="j=1-37"/>
</dbReference>
<dbReference type="PDB" id="7O5B">
    <property type="method" value="EM"/>
    <property type="resolution" value="3.33 A"/>
    <property type="chains" value="4=1-37"/>
</dbReference>
<dbReference type="PDB" id="7OPE">
    <property type="method" value="EM"/>
    <property type="resolution" value="3.20 A"/>
    <property type="chains" value="j=1-37"/>
</dbReference>
<dbReference type="PDB" id="7QGU">
    <property type="method" value="EM"/>
    <property type="resolution" value="4.75 A"/>
    <property type="chains" value="f=1-37"/>
</dbReference>
<dbReference type="PDB" id="7QH4">
    <property type="method" value="EM"/>
    <property type="resolution" value="5.45 A"/>
    <property type="chains" value="f=1-37"/>
</dbReference>
<dbReference type="PDB" id="7QV1">
    <property type="method" value="EM"/>
    <property type="resolution" value="3.50 A"/>
    <property type="chains" value="4=1-37"/>
</dbReference>
<dbReference type="PDB" id="7QV2">
    <property type="method" value="EM"/>
    <property type="resolution" value="3.50 A"/>
    <property type="chains" value="4=1-37"/>
</dbReference>
<dbReference type="PDB" id="7QV3">
    <property type="method" value="EM"/>
    <property type="resolution" value="5.14 A"/>
    <property type="chains" value="4=1-37"/>
</dbReference>
<dbReference type="PDB" id="8BUU">
    <property type="method" value="EM"/>
    <property type="resolution" value="2.90 A"/>
    <property type="chains" value="4=1-37"/>
</dbReference>
<dbReference type="PDB" id="8QCQ">
    <property type="method" value="EM"/>
    <property type="resolution" value="2.30 A"/>
    <property type="chains" value="4=1-37"/>
</dbReference>
<dbReference type="PDB" id="8QPP">
    <property type="method" value="EM"/>
    <property type="resolution" value="3.40 A"/>
    <property type="chains" value="4=1-37"/>
</dbReference>
<dbReference type="PDB" id="8R55">
    <property type="method" value="EM"/>
    <property type="resolution" value="3.57 A"/>
    <property type="chains" value="4=1-37"/>
</dbReference>
<dbReference type="PDB" id="8S1P">
    <property type="method" value="EM"/>
    <property type="resolution" value="1.96 A"/>
    <property type="chains" value="4=1-37"/>
</dbReference>
<dbReference type="PDB" id="8S1U">
    <property type="method" value="EM"/>
    <property type="resolution" value="3.40 A"/>
    <property type="chains" value="4=1-37"/>
</dbReference>
<dbReference type="PDBsum" id="3J9W"/>
<dbReference type="PDBsum" id="5NJT"/>
<dbReference type="PDBsum" id="6HA1"/>
<dbReference type="PDBsum" id="6HA8"/>
<dbReference type="PDBsum" id="6HTQ"/>
<dbReference type="PDBsum" id="6TNN"/>
<dbReference type="PDBsum" id="6TPQ"/>
<dbReference type="PDBsum" id="7AQC"/>
<dbReference type="PDBsum" id="7AQD"/>
<dbReference type="PDBsum" id="7AS8"/>
<dbReference type="PDBsum" id="7AS9"/>
<dbReference type="PDBsum" id="7O5B"/>
<dbReference type="PDBsum" id="7OPE"/>
<dbReference type="PDBsum" id="7QGU"/>
<dbReference type="PDBsum" id="7QH4"/>
<dbReference type="PDBsum" id="7QV1"/>
<dbReference type="PDBsum" id="7QV2"/>
<dbReference type="PDBsum" id="7QV3"/>
<dbReference type="PDBsum" id="8BUU"/>
<dbReference type="PDBsum" id="8QCQ"/>
<dbReference type="PDBsum" id="8QPP"/>
<dbReference type="PDBsum" id="8R55"/>
<dbReference type="PDBsum" id="8S1P"/>
<dbReference type="PDBsum" id="8S1U"/>
<dbReference type="EMDB" id="EMD-0176"/>
<dbReference type="EMDB" id="EMD-0177"/>
<dbReference type="EMDB" id="EMD-0270"/>
<dbReference type="EMDB" id="EMD-10535"/>
<dbReference type="EMDB" id="EMD-10543"/>
<dbReference type="EMDB" id="EMD-11862"/>
<dbReference type="EMDB" id="EMD-11864"/>
<dbReference type="EMDB" id="EMD-11889"/>
<dbReference type="EMDB" id="EMD-11890"/>
<dbReference type="EMDB" id="EMD-12734"/>
<dbReference type="EMDB" id="EMD-13017"/>
<dbReference type="EMDB" id="EMD-14157"/>
<dbReference type="EMDB" id="EMD-14158"/>
<dbReference type="EMDB" id="EMD-14159"/>
<dbReference type="EMDB" id="EMD-16246"/>
<dbReference type="EMDB" id="EMD-18332"/>
<dbReference type="EMDB" id="EMD-19638"/>
<dbReference type="EMDB" id="EMD-19641"/>
<dbReference type="EMDB" id="EMD-3656"/>
<dbReference type="SMR" id="P20278"/>
<dbReference type="FunCoup" id="P20278">
    <property type="interactions" value="135"/>
</dbReference>
<dbReference type="STRING" id="224308.BSU01400"/>
<dbReference type="PaxDb" id="224308-BSU01400"/>
<dbReference type="EnsemblBacteria" id="CAB11916">
    <property type="protein sequence ID" value="CAB11916"/>
    <property type="gene ID" value="BSU_01400"/>
</dbReference>
<dbReference type="GeneID" id="938927"/>
<dbReference type="GeneID" id="97412846"/>
<dbReference type="KEGG" id="bsu:BSU01400"/>
<dbReference type="PATRIC" id="fig|224308.179.peg.144"/>
<dbReference type="eggNOG" id="COG0257">
    <property type="taxonomic scope" value="Bacteria"/>
</dbReference>
<dbReference type="InParanoid" id="P20278"/>
<dbReference type="OrthoDB" id="9802520at2"/>
<dbReference type="BioCyc" id="BSUB:BSU01400-MONOMER"/>
<dbReference type="PRO" id="PR:P20278"/>
<dbReference type="Proteomes" id="UP000001570">
    <property type="component" value="Chromosome"/>
</dbReference>
<dbReference type="GO" id="GO:0005737">
    <property type="term" value="C:cytoplasm"/>
    <property type="evidence" value="ECO:0007669"/>
    <property type="project" value="UniProtKB-ARBA"/>
</dbReference>
<dbReference type="GO" id="GO:1990904">
    <property type="term" value="C:ribonucleoprotein complex"/>
    <property type="evidence" value="ECO:0007669"/>
    <property type="project" value="UniProtKB-KW"/>
</dbReference>
<dbReference type="GO" id="GO:0005840">
    <property type="term" value="C:ribosome"/>
    <property type="evidence" value="ECO:0007669"/>
    <property type="project" value="UniProtKB-KW"/>
</dbReference>
<dbReference type="GO" id="GO:0003735">
    <property type="term" value="F:structural constituent of ribosome"/>
    <property type="evidence" value="ECO:0007669"/>
    <property type="project" value="InterPro"/>
</dbReference>
<dbReference type="GO" id="GO:0006412">
    <property type="term" value="P:translation"/>
    <property type="evidence" value="ECO:0007669"/>
    <property type="project" value="UniProtKB-UniRule"/>
</dbReference>
<dbReference type="HAMAP" id="MF_00251">
    <property type="entry name" value="Ribosomal_bL36"/>
    <property type="match status" value="1"/>
</dbReference>
<dbReference type="InterPro" id="IPR000473">
    <property type="entry name" value="Ribosomal_bL36"/>
</dbReference>
<dbReference type="InterPro" id="IPR035977">
    <property type="entry name" value="Ribosomal_bL36_sp"/>
</dbReference>
<dbReference type="NCBIfam" id="TIGR01022">
    <property type="entry name" value="rpmJ_bact"/>
    <property type="match status" value="1"/>
</dbReference>
<dbReference type="PANTHER" id="PTHR42888">
    <property type="entry name" value="50S RIBOSOMAL PROTEIN L36, CHLOROPLASTIC"/>
    <property type="match status" value="1"/>
</dbReference>
<dbReference type="PANTHER" id="PTHR42888:SF1">
    <property type="entry name" value="LARGE RIBOSOMAL SUBUNIT PROTEIN BL36C"/>
    <property type="match status" value="1"/>
</dbReference>
<dbReference type="Pfam" id="PF00444">
    <property type="entry name" value="Ribosomal_L36"/>
    <property type="match status" value="1"/>
</dbReference>
<dbReference type="SUPFAM" id="SSF57840">
    <property type="entry name" value="Ribosomal protein L36"/>
    <property type="match status" value="1"/>
</dbReference>
<dbReference type="PROSITE" id="PS00828">
    <property type="entry name" value="RIBOSOMAL_L36"/>
    <property type="match status" value="1"/>
</dbReference>
<name>RL36_BACSU</name>
<proteinExistence type="evidence at protein level"/>
<evidence type="ECO:0000269" key="1">
    <source>
    </source>
</evidence>
<evidence type="ECO:0000305" key="2"/>
<evidence type="ECO:0007744" key="3">
    <source>
        <dbReference type="PDB" id="6HA1"/>
    </source>
</evidence>
<evidence type="ECO:0007744" key="4">
    <source>
        <dbReference type="PDB" id="6HA8"/>
    </source>
</evidence>
<evidence type="ECO:0007829" key="5">
    <source>
        <dbReference type="PDB" id="8S1P"/>
    </source>
</evidence>
<feature type="chain" id="PRO_0000126149" description="Large ribosomal subunit protein bL36">
    <location>
        <begin position="1"/>
        <end position="37"/>
    </location>
</feature>
<feature type="strand" evidence="5">
    <location>
        <begin position="2"/>
        <end position="5"/>
    </location>
</feature>
<feature type="strand" evidence="5">
    <location>
        <begin position="10"/>
        <end position="13"/>
    </location>
</feature>
<feature type="strand" evidence="5">
    <location>
        <begin position="15"/>
        <end position="19"/>
    </location>
</feature>
<feature type="strand" evidence="5">
    <location>
        <begin position="22"/>
        <end position="26"/>
    </location>
</feature>
<feature type="helix" evidence="5">
    <location>
        <begin position="30"/>
        <end position="32"/>
    </location>
</feature>
<feature type="strand" evidence="5">
    <location>
        <begin position="34"/>
        <end position="36"/>
    </location>
</feature>
<gene>
    <name type="primary">rpmJ</name>
    <name type="ordered locus">BSU01400</name>
</gene>
<accession>P20278</accession>
<keyword id="KW-0002">3D-structure</keyword>
<keyword id="KW-1185">Reference proteome</keyword>
<keyword id="KW-0687">Ribonucleoprotein</keyword>
<keyword id="KW-0689">Ribosomal protein</keyword>
<organism>
    <name type="scientific">Bacillus subtilis (strain 168)</name>
    <dbReference type="NCBI Taxonomy" id="224308"/>
    <lineage>
        <taxon>Bacteria</taxon>
        <taxon>Bacillati</taxon>
        <taxon>Bacillota</taxon>
        <taxon>Bacilli</taxon>
        <taxon>Bacillales</taxon>
        <taxon>Bacillaceae</taxon>
        <taxon>Bacillus</taxon>
    </lineage>
</organism>
<sequence>MKVRPSVKPICEKCKVIRRKGKVMVICENPKHKQKQG</sequence>
<reference key="1">
    <citation type="journal article" date="1989" name="J. Bacteriol.">
        <title>Gene encoding the alpha core subunit of Bacillus subtilis RNA polymerase is cotranscribed with the genes for initiation factor 1 and ribosomal proteins B, S13, S11, and L17.</title>
        <authorList>
            <person name="Boylan S.A."/>
            <person name="Suh J.-W."/>
            <person name="Thomas S.M."/>
            <person name="Price C.W."/>
        </authorList>
    </citation>
    <scope>NUCLEOTIDE SEQUENCE [GENOMIC DNA]</scope>
</reference>
<reference key="2">
    <citation type="journal article" date="1996" name="Gene">
        <title>Genetic and transcriptional organization of the Bacillus subtilis spc-alpha region.</title>
        <authorList>
            <person name="Suh J.-W."/>
            <person name="Boylan S.A."/>
            <person name="Oh S.H."/>
            <person name="Price C.W."/>
        </authorList>
    </citation>
    <scope>NUCLEOTIDE SEQUENCE [GENOMIC DNA]</scope>
    <source>
        <strain>168 / Marburg / ATCC 6051 / DSM 10 / JCM 1465 / NBRC 13719 / NCIMB 3610 / NRRL NRS-744 / VKM B-501</strain>
    </source>
</reference>
<reference key="3">
    <citation type="journal article" date="1997" name="Nature">
        <title>The complete genome sequence of the Gram-positive bacterium Bacillus subtilis.</title>
        <authorList>
            <person name="Kunst F."/>
            <person name="Ogasawara N."/>
            <person name="Moszer I."/>
            <person name="Albertini A.M."/>
            <person name="Alloni G."/>
            <person name="Azevedo V."/>
            <person name="Bertero M.G."/>
            <person name="Bessieres P."/>
            <person name="Bolotin A."/>
            <person name="Borchert S."/>
            <person name="Borriss R."/>
            <person name="Boursier L."/>
            <person name="Brans A."/>
            <person name="Braun M."/>
            <person name="Brignell S.C."/>
            <person name="Bron S."/>
            <person name="Brouillet S."/>
            <person name="Bruschi C.V."/>
            <person name="Caldwell B."/>
            <person name="Capuano V."/>
            <person name="Carter N.M."/>
            <person name="Choi S.-K."/>
            <person name="Codani J.-J."/>
            <person name="Connerton I.F."/>
            <person name="Cummings N.J."/>
            <person name="Daniel R.A."/>
            <person name="Denizot F."/>
            <person name="Devine K.M."/>
            <person name="Duesterhoeft A."/>
            <person name="Ehrlich S.D."/>
            <person name="Emmerson P.T."/>
            <person name="Entian K.-D."/>
            <person name="Errington J."/>
            <person name="Fabret C."/>
            <person name="Ferrari E."/>
            <person name="Foulger D."/>
            <person name="Fritz C."/>
            <person name="Fujita M."/>
            <person name="Fujita Y."/>
            <person name="Fuma S."/>
            <person name="Galizzi A."/>
            <person name="Galleron N."/>
            <person name="Ghim S.-Y."/>
            <person name="Glaser P."/>
            <person name="Goffeau A."/>
            <person name="Golightly E.J."/>
            <person name="Grandi G."/>
            <person name="Guiseppi G."/>
            <person name="Guy B.J."/>
            <person name="Haga K."/>
            <person name="Haiech J."/>
            <person name="Harwood C.R."/>
            <person name="Henaut A."/>
            <person name="Hilbert H."/>
            <person name="Holsappel S."/>
            <person name="Hosono S."/>
            <person name="Hullo M.-F."/>
            <person name="Itaya M."/>
            <person name="Jones L.-M."/>
            <person name="Joris B."/>
            <person name="Karamata D."/>
            <person name="Kasahara Y."/>
            <person name="Klaerr-Blanchard M."/>
            <person name="Klein C."/>
            <person name="Kobayashi Y."/>
            <person name="Koetter P."/>
            <person name="Koningstein G."/>
            <person name="Krogh S."/>
            <person name="Kumano M."/>
            <person name="Kurita K."/>
            <person name="Lapidus A."/>
            <person name="Lardinois S."/>
            <person name="Lauber J."/>
            <person name="Lazarevic V."/>
            <person name="Lee S.-M."/>
            <person name="Levine A."/>
            <person name="Liu H."/>
            <person name="Masuda S."/>
            <person name="Mauel C."/>
            <person name="Medigue C."/>
            <person name="Medina N."/>
            <person name="Mellado R.P."/>
            <person name="Mizuno M."/>
            <person name="Moestl D."/>
            <person name="Nakai S."/>
            <person name="Noback M."/>
            <person name="Noone D."/>
            <person name="O'Reilly M."/>
            <person name="Ogawa K."/>
            <person name="Ogiwara A."/>
            <person name="Oudega B."/>
            <person name="Park S.-H."/>
            <person name="Parro V."/>
            <person name="Pohl T.M."/>
            <person name="Portetelle D."/>
            <person name="Porwollik S."/>
            <person name="Prescott A.M."/>
            <person name="Presecan E."/>
            <person name="Pujic P."/>
            <person name="Purnelle B."/>
            <person name="Rapoport G."/>
            <person name="Rey M."/>
            <person name="Reynolds S."/>
            <person name="Rieger M."/>
            <person name="Rivolta C."/>
            <person name="Rocha E."/>
            <person name="Roche B."/>
            <person name="Rose M."/>
            <person name="Sadaie Y."/>
            <person name="Sato T."/>
            <person name="Scanlan E."/>
            <person name="Schleich S."/>
            <person name="Schroeter R."/>
            <person name="Scoffone F."/>
            <person name="Sekiguchi J."/>
            <person name="Sekowska A."/>
            <person name="Seror S.J."/>
            <person name="Serror P."/>
            <person name="Shin B.-S."/>
            <person name="Soldo B."/>
            <person name="Sorokin A."/>
            <person name="Tacconi E."/>
            <person name="Takagi T."/>
            <person name="Takahashi H."/>
            <person name="Takemaru K."/>
            <person name="Takeuchi M."/>
            <person name="Tamakoshi A."/>
            <person name="Tanaka T."/>
            <person name="Terpstra P."/>
            <person name="Tognoni A."/>
            <person name="Tosato V."/>
            <person name="Uchiyama S."/>
            <person name="Vandenbol M."/>
            <person name="Vannier F."/>
            <person name="Vassarotti A."/>
            <person name="Viari A."/>
            <person name="Wambutt R."/>
            <person name="Wedler E."/>
            <person name="Wedler H."/>
            <person name="Weitzenegger T."/>
            <person name="Winters P."/>
            <person name="Wipat A."/>
            <person name="Yamamoto H."/>
            <person name="Yamane K."/>
            <person name="Yasumoto K."/>
            <person name="Yata K."/>
            <person name="Yoshida K."/>
            <person name="Yoshikawa H.-F."/>
            <person name="Zumstein E."/>
            <person name="Yoshikawa H."/>
            <person name="Danchin A."/>
        </authorList>
    </citation>
    <scope>NUCLEOTIDE SEQUENCE [LARGE SCALE GENOMIC DNA]</scope>
    <source>
        <strain>168</strain>
    </source>
</reference>
<reference evidence="3 4" key="4">
    <citation type="journal article" date="2018" name="Proc. Natl. Acad. Sci. U.S.A.">
        <title>Structural basis for antibiotic resistance mediated by the Bacillus subtilis ABCF ATPase VmlR.</title>
        <authorList>
            <person name="Crowe-McAuliffe C."/>
            <person name="Graf M."/>
            <person name="Huter P."/>
            <person name="Takada H."/>
            <person name="Abdelshahid M."/>
            <person name="Novacek J."/>
            <person name="Murina V."/>
            <person name="Atkinson G.C."/>
            <person name="Hauryliuk V."/>
            <person name="Wilson D.N."/>
        </authorList>
    </citation>
    <scope>STRUCTURE BY ELECTRON MICROSCOPY (3.10 ANGSTROMS) OF 1-37 WITH AND WITHOUT VIRGINIAMYCIN M</scope>
    <scope>SUBUNIT</scope>
</reference>
<comment type="subunit">
    <text evidence="1">Part of the 50S ribosomal subunit.</text>
</comment>
<comment type="similarity">
    <text evidence="2">Belongs to the bacterial ribosomal protein bL36 family.</text>
</comment>
<protein>
    <recommendedName>
        <fullName evidence="2">Large ribosomal subunit protein bL36</fullName>
    </recommendedName>
    <alternativeName>
        <fullName>50S ribosomal protein L36</fullName>
    </alternativeName>
    <alternativeName>
        <fullName>BL38</fullName>
    </alternativeName>
    <alternativeName>
        <fullName>Ribosomal protein B</fullName>
    </alternativeName>
    <alternativeName>
        <fullName>Ribosomal protein II</fullName>
    </alternativeName>
</protein>